<dbReference type="GO" id="GO:0005576">
    <property type="term" value="C:extracellular region"/>
    <property type="evidence" value="ECO:0007669"/>
    <property type="project" value="UniProtKB-SubCell"/>
</dbReference>
<dbReference type="GO" id="GO:0006952">
    <property type="term" value="P:defense response"/>
    <property type="evidence" value="ECO:0007669"/>
    <property type="project" value="UniProtKB-KW"/>
</dbReference>
<dbReference type="InterPro" id="IPR013157">
    <property type="entry name" value="Aurein_antimicrobial_peptide"/>
</dbReference>
<dbReference type="Pfam" id="PF08256">
    <property type="entry name" value="Antimicrobial20"/>
    <property type="match status" value="1"/>
</dbReference>
<organism>
    <name type="scientific">Ranoidea citropa</name>
    <name type="common">Australian Blue Mountains tree frog</name>
    <name type="synonym">Litoria citropa</name>
    <dbReference type="NCBI Taxonomy" id="94770"/>
    <lineage>
        <taxon>Eukaryota</taxon>
        <taxon>Metazoa</taxon>
        <taxon>Chordata</taxon>
        <taxon>Craniata</taxon>
        <taxon>Vertebrata</taxon>
        <taxon>Euteleostomi</taxon>
        <taxon>Amphibia</taxon>
        <taxon>Batrachia</taxon>
        <taxon>Anura</taxon>
        <taxon>Neobatrachia</taxon>
        <taxon>Hyloidea</taxon>
        <taxon>Hylidae</taxon>
        <taxon>Pelodryadinae</taxon>
        <taxon>Ranoidea</taxon>
    </lineage>
</organism>
<reference key="1">
    <citation type="journal article" date="1999" name="Eur. J. Biochem.">
        <title>Host defence peptides from the skin glands of the Australian blue mountains tree-frog Litoria citropa. Solution structure of the antibacterial peptide citropin 1.1.</title>
        <authorList>
            <person name="Wegener K.L."/>
            <person name="Wabnitz P.A."/>
            <person name="Carver J.A."/>
            <person name="Bowie J.H."/>
            <person name="Chia B.C.S."/>
            <person name="Wallace J.C."/>
            <person name="Tyler M.J."/>
        </authorList>
    </citation>
    <scope>PROTEIN SEQUENCE</scope>
    <source>
        <tissue>Skin secretion</tissue>
    </source>
</reference>
<feature type="peptide" id="PRO_0000043771" description="Citropin-1.2.5">
    <location>
        <begin position="1"/>
        <end position="18"/>
    </location>
</feature>
<accession>P81845</accession>
<keyword id="KW-0878">Amphibian defense peptide</keyword>
<keyword id="KW-0903">Direct protein sequencing</keyword>
<keyword id="KW-0964">Secreted</keyword>
<sequence length="18" mass="1845">GLFDIIKKVASVVGLASQ</sequence>
<comment type="subcellular location">
    <subcellularLocation>
        <location>Secreted</location>
    </subcellularLocation>
</comment>
<comment type="tissue specificity">
    <text>Expressed by the dorsal and submental skin glands.</text>
</comment>
<proteinExistence type="evidence at protein level"/>
<name>CT125_RANCI</name>
<protein>
    <recommendedName>
        <fullName>Citropin-1.2.5</fullName>
    </recommendedName>
</protein>